<gene>
    <name evidence="5" type="primary">KIN17</name>
    <name evidence="9" type="ordered locus">Os03g0570300</name>
    <name evidence="8" type="ordered locus">LOC_Os03g37330</name>
    <name evidence="6" type="ORF">OSJNBa0004B24.17</name>
    <name evidence="7" type="ORF">OSJNBb0015I21.3</name>
</gene>
<proteinExistence type="evidence at transcript level"/>
<dbReference type="EMBL" id="AC084319">
    <property type="protein sequence ID" value="AAG59654.1"/>
    <property type="status" value="ALT_SEQ"/>
    <property type="molecule type" value="Genomic_DNA"/>
</dbReference>
<dbReference type="EMBL" id="AC091302">
    <property type="protein sequence ID" value="AAR00634.1"/>
    <property type="molecule type" value="Genomic_DNA"/>
</dbReference>
<dbReference type="EMBL" id="DP000009">
    <property type="protein sequence ID" value="ABF97196.1"/>
    <property type="molecule type" value="Genomic_DNA"/>
</dbReference>
<dbReference type="EMBL" id="AP008209">
    <property type="protein sequence ID" value="BAF12433.1"/>
    <property type="molecule type" value="Genomic_DNA"/>
</dbReference>
<dbReference type="EMBL" id="AP014959">
    <property type="protein sequence ID" value="BAS84985.1"/>
    <property type="molecule type" value="Genomic_DNA"/>
</dbReference>
<dbReference type="EMBL" id="AK069396">
    <property type="protein sequence ID" value="BAG91411.1"/>
    <property type="molecule type" value="mRNA"/>
</dbReference>
<dbReference type="RefSeq" id="XP_015631711.1">
    <property type="nucleotide sequence ID" value="XM_015776225.1"/>
</dbReference>
<dbReference type="RefSeq" id="XP_015631712.1">
    <property type="nucleotide sequence ID" value="XM_015776226.1"/>
</dbReference>
<dbReference type="RefSeq" id="XP_015631713.1">
    <property type="nucleotide sequence ID" value="XM_015776227.1"/>
</dbReference>
<dbReference type="SMR" id="Q75LU5"/>
<dbReference type="FunCoup" id="Q75LU5">
    <property type="interactions" value="2831"/>
</dbReference>
<dbReference type="STRING" id="39947.Q75LU5"/>
<dbReference type="iPTMnet" id="Q75LU5"/>
<dbReference type="PaxDb" id="39947-Q75LU5"/>
<dbReference type="EnsemblPlants" id="Os03t0570300-01">
    <property type="protein sequence ID" value="Os03t0570300-01"/>
    <property type="gene ID" value="Os03g0570300"/>
</dbReference>
<dbReference type="Gramene" id="Os03t0570300-01">
    <property type="protein sequence ID" value="Os03t0570300-01"/>
    <property type="gene ID" value="Os03g0570300"/>
</dbReference>
<dbReference type="KEGG" id="dosa:Os03g0570300"/>
<dbReference type="eggNOG" id="KOG2837">
    <property type="taxonomic scope" value="Eukaryota"/>
</dbReference>
<dbReference type="HOGENOM" id="CLU_030065_1_0_1"/>
<dbReference type="InParanoid" id="Q75LU5"/>
<dbReference type="OMA" id="RMTDFIE"/>
<dbReference type="OrthoDB" id="10266249at2759"/>
<dbReference type="Proteomes" id="UP000000763">
    <property type="component" value="Chromosome 3"/>
</dbReference>
<dbReference type="Proteomes" id="UP000059680">
    <property type="component" value="Chromosome 3"/>
</dbReference>
<dbReference type="GO" id="GO:0005634">
    <property type="term" value="C:nucleus"/>
    <property type="evidence" value="ECO:0000318"/>
    <property type="project" value="GO_Central"/>
</dbReference>
<dbReference type="GO" id="GO:0003690">
    <property type="term" value="F:double-stranded DNA binding"/>
    <property type="evidence" value="ECO:0000318"/>
    <property type="project" value="GO_Central"/>
</dbReference>
<dbReference type="GO" id="GO:0008270">
    <property type="term" value="F:zinc ion binding"/>
    <property type="evidence" value="ECO:0007669"/>
    <property type="project" value="UniProtKB-KW"/>
</dbReference>
<dbReference type="GO" id="GO:0006974">
    <property type="term" value="P:DNA damage response"/>
    <property type="evidence" value="ECO:0000318"/>
    <property type="project" value="GO_Central"/>
</dbReference>
<dbReference type="GO" id="GO:0006260">
    <property type="term" value="P:DNA replication"/>
    <property type="evidence" value="ECO:0000318"/>
    <property type="project" value="GO_Central"/>
</dbReference>
<dbReference type="CDD" id="cd13155">
    <property type="entry name" value="KOW_KIN17"/>
    <property type="match status" value="1"/>
</dbReference>
<dbReference type="FunFam" id="1.10.10.2030:FF:000001">
    <property type="entry name" value="DNA/RNA-binding protein KIN17, putative"/>
    <property type="match status" value="1"/>
</dbReference>
<dbReference type="FunFam" id="2.30.30.30:FF:000021">
    <property type="entry name" value="DNA/RNA-binding protein KIN17, putative"/>
    <property type="match status" value="1"/>
</dbReference>
<dbReference type="FunFam" id="2.30.30.140:FF:000056">
    <property type="entry name" value="DNA/RNA-binding protein kin17-like"/>
    <property type="match status" value="1"/>
</dbReference>
<dbReference type="Gene3D" id="2.30.30.140">
    <property type="match status" value="1"/>
</dbReference>
<dbReference type="Gene3D" id="2.30.30.30">
    <property type="match status" value="1"/>
</dbReference>
<dbReference type="Gene3D" id="1.10.10.2030">
    <property type="entry name" value="DNA/RNA-binding protein Kin17, conserved domain"/>
    <property type="match status" value="1"/>
</dbReference>
<dbReference type="InterPro" id="IPR056767">
    <property type="entry name" value="C2H2-Znf_KIN17"/>
</dbReference>
<dbReference type="InterPro" id="IPR019447">
    <property type="entry name" value="DNA/RNA-bd_Kin17_WH-like_dom"/>
</dbReference>
<dbReference type="InterPro" id="IPR037321">
    <property type="entry name" value="KIN17-like"/>
</dbReference>
<dbReference type="InterPro" id="IPR038254">
    <property type="entry name" value="KIN17_WH-like_sf"/>
</dbReference>
<dbReference type="InterPro" id="IPR041330">
    <property type="entry name" value="KN17_SH3"/>
</dbReference>
<dbReference type="InterPro" id="IPR041995">
    <property type="entry name" value="KOW_KIN17"/>
</dbReference>
<dbReference type="InterPro" id="IPR014722">
    <property type="entry name" value="Rib_uL2_dom2"/>
</dbReference>
<dbReference type="InterPro" id="IPR036236">
    <property type="entry name" value="Znf_C2H2_sf"/>
</dbReference>
<dbReference type="PANTHER" id="PTHR12805:SF0">
    <property type="entry name" value="DNA_RNA-BINDING PROTEIN KIN17"/>
    <property type="match status" value="1"/>
</dbReference>
<dbReference type="PANTHER" id="PTHR12805">
    <property type="entry name" value="KIN17 KIN, ANTIGENIC DETERMINANT OF RECA PROTEIN HOMOLOG"/>
    <property type="match status" value="1"/>
</dbReference>
<dbReference type="Pfam" id="PF25095">
    <property type="entry name" value="C2H2-zf_KIN17"/>
    <property type="match status" value="1"/>
</dbReference>
<dbReference type="Pfam" id="PF18131">
    <property type="entry name" value="KN17_SH3"/>
    <property type="match status" value="1"/>
</dbReference>
<dbReference type="Pfam" id="PF25092">
    <property type="entry name" value="SH3_KIN17_C"/>
    <property type="match status" value="1"/>
</dbReference>
<dbReference type="Pfam" id="PF10357">
    <property type="entry name" value="WH_KIN17"/>
    <property type="match status" value="1"/>
</dbReference>
<dbReference type="SMART" id="SM01253">
    <property type="entry name" value="Kin17_mid"/>
    <property type="match status" value="1"/>
</dbReference>
<dbReference type="SUPFAM" id="SSF57667">
    <property type="entry name" value="beta-beta-alpha zinc fingers"/>
    <property type="match status" value="1"/>
</dbReference>
<dbReference type="PROSITE" id="PS00028">
    <property type="entry name" value="ZINC_FINGER_C2H2_1"/>
    <property type="match status" value="1"/>
</dbReference>
<reference key="1">
    <citation type="journal article" date="2005" name="Genome Res.">
        <title>Sequence, annotation, and analysis of synteny between rice chromosome 3 and diverged grass species.</title>
        <authorList>
            <consortium name="The rice chromosome 3 sequencing consortium"/>
            <person name="Buell C.R."/>
            <person name="Yuan Q."/>
            <person name="Ouyang S."/>
            <person name="Liu J."/>
            <person name="Zhu W."/>
            <person name="Wang A."/>
            <person name="Maiti R."/>
            <person name="Haas B."/>
            <person name="Wortman J."/>
            <person name="Pertea M."/>
            <person name="Jones K.M."/>
            <person name="Kim M."/>
            <person name="Overton L."/>
            <person name="Tsitrin T."/>
            <person name="Fadrosh D."/>
            <person name="Bera J."/>
            <person name="Weaver B."/>
            <person name="Jin S."/>
            <person name="Johri S."/>
            <person name="Reardon M."/>
            <person name="Webb K."/>
            <person name="Hill J."/>
            <person name="Moffat K."/>
            <person name="Tallon L."/>
            <person name="Van Aken S."/>
            <person name="Lewis M."/>
            <person name="Utterback T."/>
            <person name="Feldblyum T."/>
            <person name="Zismann V."/>
            <person name="Iobst S."/>
            <person name="Hsiao J."/>
            <person name="de Vazeille A.R."/>
            <person name="Salzberg S.L."/>
            <person name="White O."/>
            <person name="Fraser C.M."/>
            <person name="Yu Y."/>
            <person name="Kim H."/>
            <person name="Rambo T."/>
            <person name="Currie J."/>
            <person name="Collura K."/>
            <person name="Kernodle-Thompson S."/>
            <person name="Wei F."/>
            <person name="Kudrna K."/>
            <person name="Ammiraju J.S.S."/>
            <person name="Luo M."/>
            <person name="Goicoechea J.L."/>
            <person name="Wing R.A."/>
            <person name="Henry D."/>
            <person name="Oates R."/>
            <person name="Palmer M."/>
            <person name="Pries G."/>
            <person name="Saski C."/>
            <person name="Simmons J."/>
            <person name="Soderlund C."/>
            <person name="Nelson W."/>
            <person name="de la Bastide M."/>
            <person name="Spiegel L."/>
            <person name="Nascimento L."/>
            <person name="Huang E."/>
            <person name="Preston R."/>
            <person name="Zutavern T."/>
            <person name="Palmer L."/>
            <person name="O'Shaughnessy A."/>
            <person name="Dike S."/>
            <person name="McCombie W.R."/>
            <person name="Minx P."/>
            <person name="Cordum H."/>
            <person name="Wilson R."/>
            <person name="Jin W."/>
            <person name="Lee H.R."/>
            <person name="Jiang J."/>
            <person name="Jackson S."/>
        </authorList>
    </citation>
    <scope>NUCLEOTIDE SEQUENCE [LARGE SCALE GENOMIC DNA]</scope>
    <source>
        <strain>cv. Nipponbare</strain>
    </source>
</reference>
<reference key="2">
    <citation type="journal article" date="2005" name="Nature">
        <title>The map-based sequence of the rice genome.</title>
        <authorList>
            <consortium name="International rice genome sequencing project (IRGSP)"/>
        </authorList>
    </citation>
    <scope>NUCLEOTIDE SEQUENCE [LARGE SCALE GENOMIC DNA]</scope>
    <source>
        <strain>cv. Nipponbare</strain>
    </source>
</reference>
<reference key="3">
    <citation type="journal article" date="2008" name="Nucleic Acids Res.">
        <title>The rice annotation project database (RAP-DB): 2008 update.</title>
        <authorList>
            <consortium name="The rice annotation project (RAP)"/>
        </authorList>
    </citation>
    <scope>GENOME REANNOTATION</scope>
    <source>
        <strain>cv. Nipponbare</strain>
    </source>
</reference>
<reference key="4">
    <citation type="journal article" date="2013" name="Rice">
        <title>Improvement of the Oryza sativa Nipponbare reference genome using next generation sequence and optical map data.</title>
        <authorList>
            <person name="Kawahara Y."/>
            <person name="de la Bastide M."/>
            <person name="Hamilton J.P."/>
            <person name="Kanamori H."/>
            <person name="McCombie W.R."/>
            <person name="Ouyang S."/>
            <person name="Schwartz D.C."/>
            <person name="Tanaka T."/>
            <person name="Wu J."/>
            <person name="Zhou S."/>
            <person name="Childs K.L."/>
            <person name="Davidson R.M."/>
            <person name="Lin H."/>
            <person name="Quesada-Ocampo L."/>
            <person name="Vaillancourt B."/>
            <person name="Sakai H."/>
            <person name="Lee S.S."/>
            <person name="Kim J."/>
            <person name="Numa H."/>
            <person name="Itoh T."/>
            <person name="Buell C.R."/>
            <person name="Matsumoto T."/>
        </authorList>
    </citation>
    <scope>GENOME REANNOTATION</scope>
    <source>
        <strain>cv. Nipponbare</strain>
    </source>
</reference>
<reference key="5">
    <citation type="journal article" date="2003" name="Science">
        <title>Collection, mapping, and annotation of over 28,000 cDNA clones from japonica rice.</title>
        <authorList>
            <consortium name="The rice full-length cDNA consortium"/>
        </authorList>
    </citation>
    <scope>NUCLEOTIDE SEQUENCE [LARGE SCALE MRNA]</scope>
    <source>
        <strain>cv. Nipponbare</strain>
    </source>
</reference>
<name>KIN17_ORYSJ</name>
<comment type="subcellular location">
    <subcellularLocation>
        <location evidence="2">Nucleus</location>
    </subcellularLocation>
</comment>
<comment type="similarity">
    <text evidence="5">Belongs to the KIN17 family.</text>
</comment>
<comment type="sequence caution" evidence="5">
    <conflict type="erroneous gene model prediction">
        <sequence resource="EMBL-CDS" id="AAG59654"/>
    </conflict>
</comment>
<accession>Q75LU5</accession>
<accession>Q9AY87</accession>
<organism>
    <name type="scientific">Oryza sativa subsp. japonica</name>
    <name type="common">Rice</name>
    <dbReference type="NCBI Taxonomy" id="39947"/>
    <lineage>
        <taxon>Eukaryota</taxon>
        <taxon>Viridiplantae</taxon>
        <taxon>Streptophyta</taxon>
        <taxon>Embryophyta</taxon>
        <taxon>Tracheophyta</taxon>
        <taxon>Spermatophyta</taxon>
        <taxon>Magnoliopsida</taxon>
        <taxon>Liliopsida</taxon>
        <taxon>Poales</taxon>
        <taxon>Poaceae</taxon>
        <taxon>BOP clade</taxon>
        <taxon>Oryzoideae</taxon>
        <taxon>Oryzeae</taxon>
        <taxon>Oryzinae</taxon>
        <taxon>Oryza</taxon>
        <taxon>Oryza sativa</taxon>
    </lineage>
</organism>
<feature type="chain" id="PRO_0000438806" description="KIN17-like protein">
    <location>
        <begin position="1"/>
        <end position="430"/>
    </location>
</feature>
<feature type="zinc finger region" description="C2H2-type" evidence="3">
    <location>
        <begin position="28"/>
        <end position="50"/>
    </location>
</feature>
<feature type="region of interest" description="Winged helix-turn-helix (wHTH)" evidence="1">
    <location>
        <begin position="51"/>
        <end position="160"/>
    </location>
</feature>
<feature type="region of interest" description="Disordered" evidence="4">
    <location>
        <begin position="179"/>
        <end position="230"/>
    </location>
</feature>
<feature type="region of interest" description="Disordered" evidence="4">
    <location>
        <begin position="261"/>
        <end position="284"/>
    </location>
</feature>
<feature type="region of interest" description="C-terminal subdomain A" evidence="1">
    <location>
        <begin position="319"/>
        <end position="370"/>
    </location>
</feature>
<feature type="region of interest" description="C-terminal subdomain B" evidence="1">
    <location>
        <begin position="376"/>
        <end position="427"/>
    </location>
</feature>
<feature type="coiled-coil region" evidence="3">
    <location>
        <begin position="147"/>
        <end position="183"/>
    </location>
</feature>
<feature type="coiled-coil region" evidence="3">
    <location>
        <begin position="283"/>
        <end position="312"/>
    </location>
</feature>
<feature type="short sequence motif" description="Nuclear localization signal (NLS)" evidence="5">
    <location>
        <begin position="155"/>
        <end position="158"/>
    </location>
</feature>
<feature type="compositionally biased region" description="Acidic residues" evidence="4">
    <location>
        <begin position="191"/>
        <end position="224"/>
    </location>
</feature>
<feature type="compositionally biased region" description="Basic and acidic residues" evidence="4">
    <location>
        <begin position="261"/>
        <end position="278"/>
    </location>
</feature>
<evidence type="ECO:0000250" key="1">
    <source>
        <dbReference type="UniProtKB" id="O60870"/>
    </source>
</evidence>
<evidence type="ECO:0000250" key="2">
    <source>
        <dbReference type="UniProtKB" id="Q9ZVU5"/>
    </source>
</evidence>
<evidence type="ECO:0000255" key="3"/>
<evidence type="ECO:0000256" key="4">
    <source>
        <dbReference type="SAM" id="MobiDB-lite"/>
    </source>
</evidence>
<evidence type="ECO:0000305" key="5"/>
<evidence type="ECO:0000312" key="6">
    <source>
        <dbReference type="EMBL" id="AAG59654.1"/>
    </source>
</evidence>
<evidence type="ECO:0000312" key="7">
    <source>
        <dbReference type="EMBL" id="AAR00634.1"/>
    </source>
</evidence>
<evidence type="ECO:0000312" key="8">
    <source>
        <dbReference type="EMBL" id="ABF97196.1"/>
    </source>
</evidence>
<evidence type="ECO:0000312" key="9">
    <source>
        <dbReference type="EMBL" id="BAF12433.1"/>
    </source>
</evidence>
<protein>
    <recommendedName>
        <fullName evidence="5">KIN17-like protein</fullName>
    </recommendedName>
</protein>
<sequence length="430" mass="49068">MGKHEFLTPKAIANRIKAKGLQKLRWYCQMCQKQCRDENGFKCHCMSESHQRQMQVFGQAPDRVVEGFSEEFLDAFLTLLRRAHRHSRIAATVVYNEFIADRHHVHMNSTRWATLTEFVKFLGREGHCKVEDTPKGWFITYIDRDSEQAVKARLKRKRIKSDLAEDERQERMIARQIERAQQSMGKTNGELGDDASPDGSEGESGSEDEYSDSENDHEGQEEDAKEANKAAGKIAIALQRAVPGPKVNPLDDKPKVKFGFEEEDEVSARDKEKEELAKKKGKDAINAAEARRSALDELMKEEEKAKERSNRKDYWLCPGIVVKVMSKSLAEKGYCKQKGVVKRVIDKYVGEIEMLESKHVLRVDQDELETVIPQIGGLVRIVNGAYRGSNARLLSVDTERFCAKVQVEKGLYDGKVLKAIEYEDICKIFH</sequence>
<keyword id="KW-0175">Coiled coil</keyword>
<keyword id="KW-0479">Metal-binding</keyword>
<keyword id="KW-0539">Nucleus</keyword>
<keyword id="KW-1185">Reference proteome</keyword>
<keyword id="KW-0862">Zinc</keyword>
<keyword id="KW-0863">Zinc-finger</keyword>